<feature type="chain" id="PRO_0000406057" description="DNA replication helicase">
    <location>
        <begin position="1"/>
        <end position="789"/>
    </location>
</feature>
<feature type="binding site" evidence="1">
    <location>
        <begin position="64"/>
        <end position="71"/>
    </location>
    <ligand>
        <name>ATP</name>
        <dbReference type="ChEBI" id="CHEBI:30616"/>
    </ligand>
</feature>
<organismHost>
    <name type="scientific">Equus caballus</name>
    <name type="common">Horse</name>
    <dbReference type="NCBI Taxonomy" id="9796"/>
</organismHost>
<reference key="1">
    <citation type="journal article" date="1995" name="J. Mol. Biol.">
        <title>The DNA sequence of equine herpesvirus 2.</title>
        <authorList>
            <person name="Telford E.A.R."/>
            <person name="Watson M.S."/>
            <person name="Aird H.C."/>
            <person name="Perry J."/>
            <person name="Davison A.J."/>
        </authorList>
    </citation>
    <scope>NUCLEOTIDE SEQUENCE [LARGE SCALE GENOMIC DNA]</scope>
</reference>
<keyword id="KW-0067">ATP-binding</keyword>
<keyword id="KW-0235">DNA replication</keyword>
<keyword id="KW-0347">Helicase</keyword>
<keyword id="KW-1048">Host nucleus</keyword>
<keyword id="KW-0378">Hydrolase</keyword>
<keyword id="KW-0547">Nucleotide-binding</keyword>
<keyword id="KW-1185">Reference proteome</keyword>
<accession>Q66647</accession>
<dbReference type="EC" id="3.6.4.-" evidence="1"/>
<dbReference type="EMBL" id="U20824">
    <property type="protein sequence ID" value="AAC13832.1"/>
    <property type="molecule type" value="Genomic_DNA"/>
</dbReference>
<dbReference type="PIR" id="S55639">
    <property type="entry name" value="S55639"/>
</dbReference>
<dbReference type="KEGG" id="vg:1461079"/>
<dbReference type="Proteomes" id="UP000007083">
    <property type="component" value="Segment"/>
</dbReference>
<dbReference type="GO" id="GO:0042025">
    <property type="term" value="C:host cell nucleus"/>
    <property type="evidence" value="ECO:0007669"/>
    <property type="project" value="UniProtKB-SubCell"/>
</dbReference>
<dbReference type="GO" id="GO:0005524">
    <property type="term" value="F:ATP binding"/>
    <property type="evidence" value="ECO:0007669"/>
    <property type="project" value="UniProtKB-KW"/>
</dbReference>
<dbReference type="GO" id="GO:0004386">
    <property type="term" value="F:helicase activity"/>
    <property type="evidence" value="ECO:0007669"/>
    <property type="project" value="UniProtKB-KW"/>
</dbReference>
<dbReference type="GO" id="GO:0016787">
    <property type="term" value="F:hydrolase activity"/>
    <property type="evidence" value="ECO:0007669"/>
    <property type="project" value="UniProtKB-KW"/>
</dbReference>
<dbReference type="GO" id="GO:0006260">
    <property type="term" value="P:DNA replication"/>
    <property type="evidence" value="ECO:0007669"/>
    <property type="project" value="UniProtKB-KW"/>
</dbReference>
<dbReference type="CDD" id="cd18809">
    <property type="entry name" value="SF1_C_RecD"/>
    <property type="match status" value="1"/>
</dbReference>
<dbReference type="Gene3D" id="3.40.50.300">
    <property type="entry name" value="P-loop containing nucleotide triphosphate hydrolases"/>
    <property type="match status" value="1"/>
</dbReference>
<dbReference type="HAMAP" id="MF_04030">
    <property type="entry name" value="HSV_HELI"/>
    <property type="match status" value="1"/>
</dbReference>
<dbReference type="InterPro" id="IPR003840">
    <property type="entry name" value="DNA_helicase_dom"/>
</dbReference>
<dbReference type="InterPro" id="IPR034711">
    <property type="entry name" value="HSV_HELI"/>
</dbReference>
<dbReference type="InterPro" id="IPR027417">
    <property type="entry name" value="P-loop_NTPase"/>
</dbReference>
<dbReference type="Pfam" id="PF02689">
    <property type="entry name" value="Herpes_Helicase"/>
    <property type="match status" value="1"/>
</dbReference>
<dbReference type="SUPFAM" id="SSF52540">
    <property type="entry name" value="P-loop containing nucleoside triphosphate hydrolases"/>
    <property type="match status" value="2"/>
</dbReference>
<proteinExistence type="inferred from homology"/>
<name>HELI_EHV2</name>
<protein>
    <recommendedName>
        <fullName evidence="1">DNA replication helicase</fullName>
        <ecNumber evidence="1">3.6.4.-</ecNumber>
    </recommendedName>
</protein>
<evidence type="ECO:0000255" key="1">
    <source>
        <dbReference type="HAMAP-Rule" id="MF_04030"/>
    </source>
</evidence>
<gene>
    <name evidence="1" type="primary">HELI</name>
    <name type="ordered locus">44</name>
</gene>
<comment type="function">
    <text evidence="1">Component of the helicase/primase complex. Unwinds the DNA at the replication forks and generates single-stranded DNA for both leading and lagging strand synthesis. The primase synthesizes short RNA primers on the lagging strand that the polymerase elongates using dNTPs. Possesses helicase-like motifs and therefore may act as the helicase subunit of the complex.</text>
</comment>
<comment type="subunit">
    <text evidence="1">Associates with the primase and the primase-associated factor to form the helicase-primase complex.</text>
</comment>
<comment type="subcellular location">
    <subcellularLocation>
        <location evidence="1">Host nucleus</location>
    </subcellularLocation>
</comment>
<comment type="similarity">
    <text evidence="1">Belongs to the herpesviridae helicase family.</text>
</comment>
<sequence length="789" mass="88369">MEEPGAGFILNMTSDSKVRAIVGRIRGLAAKTVPPPEMSWFDSQFDPEDAEGPFLPFSTFLITGTAGAGKSTSISALYQSLNCLITGATAVAAQNLSNGLKTYCPTIYSAFGFKSRHINILPRHGRNAPARDMEGIQRNELCKYWPVISDILGEFTKKKQRGQYEHLTGAAFGALAKMGTPTLWTTNIIVIDEAGTLSSHILTAVVFLYWFYNSWLQTPLYKSGAVPCVVCVGSPTQTDAIQSTYNHSMQKHHIQECDNILTFLMKHEAVSRYVDLNHNWALFINNKRCTDPEFGHLLKTLEYNLDISPRMVDYIDRFVVPKSKILSPLEYVGWTRLFVSHREVKAYLTALHETLSLNQGGATAEADARLFTCPVVCEVFTDTFNEYREAVNLPGLTVTEWLQKNLCRLSNYSQFIDQDLSAVHIETGEESTKVTYLVKYVKNSYVSLNGKTKKCICGFMGTFEKFKTILDNETFIDAHSHDQPEYVYSFLNTLLYNGMYAFHKHGLDAGDEGYLDALRRLPIPPNITHLSTFQDALDQTEAALLNPESDIFYHMTCAPPSASSASLSTLISFYMSLKSVFLQRLALAVSRFGRDFAERTFQTFTINMMIQNGVDFTSASERLFGLLGYASNVDTYKLKGYTFIPVGFGRFNQAELSRDLRDKMPVVVVEDPHGFIACLENNVNKMTEVMENGDLIHICTAGDYGISSKLAMTIAKAQGMSLSRVAVCFGNSKFVRKSHVYVAISRATDPRHMVIDCNPLKNLEEDREDNKTSKYIVQALNNPDTILVY</sequence>
<organism>
    <name type="scientific">Equine herpesvirus 2 (strain 86/87)</name>
    <name type="common">EHV-2</name>
    <dbReference type="NCBI Taxonomy" id="82831"/>
    <lineage>
        <taxon>Viruses</taxon>
        <taxon>Duplodnaviria</taxon>
        <taxon>Heunggongvirae</taxon>
        <taxon>Peploviricota</taxon>
        <taxon>Herviviricetes</taxon>
        <taxon>Herpesvirales</taxon>
        <taxon>Orthoherpesviridae</taxon>
        <taxon>Gammaherpesvirinae</taxon>
        <taxon>Percavirus</taxon>
        <taxon>Percavirus equidgamma2</taxon>
        <taxon>Equid gammaherpesvirus 2</taxon>
    </lineage>
</organism>